<accession>A2BTL7</accession>
<name>MIAA_PROMS</name>
<dbReference type="EC" id="2.5.1.75" evidence="1"/>
<dbReference type="EMBL" id="CP000551">
    <property type="protein sequence ID" value="ABM71128.1"/>
    <property type="molecule type" value="Genomic_DNA"/>
</dbReference>
<dbReference type="RefSeq" id="WP_011819247.1">
    <property type="nucleotide sequence ID" value="NC_008816.1"/>
</dbReference>
<dbReference type="SMR" id="A2BTL7"/>
<dbReference type="STRING" id="146891.A9601_18451"/>
<dbReference type="KEGG" id="pmb:A9601_18451"/>
<dbReference type="eggNOG" id="COG0324">
    <property type="taxonomic scope" value="Bacteria"/>
</dbReference>
<dbReference type="HOGENOM" id="CLU_032616_0_1_3"/>
<dbReference type="OrthoDB" id="9776390at2"/>
<dbReference type="Proteomes" id="UP000002590">
    <property type="component" value="Chromosome"/>
</dbReference>
<dbReference type="GO" id="GO:0005524">
    <property type="term" value="F:ATP binding"/>
    <property type="evidence" value="ECO:0007669"/>
    <property type="project" value="UniProtKB-UniRule"/>
</dbReference>
<dbReference type="GO" id="GO:0052381">
    <property type="term" value="F:tRNA dimethylallyltransferase activity"/>
    <property type="evidence" value="ECO:0007669"/>
    <property type="project" value="UniProtKB-UniRule"/>
</dbReference>
<dbReference type="GO" id="GO:0006400">
    <property type="term" value="P:tRNA modification"/>
    <property type="evidence" value="ECO:0007669"/>
    <property type="project" value="TreeGrafter"/>
</dbReference>
<dbReference type="Gene3D" id="1.10.20.140">
    <property type="match status" value="1"/>
</dbReference>
<dbReference type="Gene3D" id="3.40.50.300">
    <property type="entry name" value="P-loop containing nucleotide triphosphate hydrolases"/>
    <property type="match status" value="1"/>
</dbReference>
<dbReference type="HAMAP" id="MF_00185">
    <property type="entry name" value="IPP_trans"/>
    <property type="match status" value="1"/>
</dbReference>
<dbReference type="InterPro" id="IPR039657">
    <property type="entry name" value="Dimethylallyltransferase"/>
</dbReference>
<dbReference type="InterPro" id="IPR018022">
    <property type="entry name" value="IPT"/>
</dbReference>
<dbReference type="InterPro" id="IPR027417">
    <property type="entry name" value="P-loop_NTPase"/>
</dbReference>
<dbReference type="NCBIfam" id="TIGR00174">
    <property type="entry name" value="miaA"/>
    <property type="match status" value="1"/>
</dbReference>
<dbReference type="PANTHER" id="PTHR11088">
    <property type="entry name" value="TRNA DIMETHYLALLYLTRANSFERASE"/>
    <property type="match status" value="1"/>
</dbReference>
<dbReference type="PANTHER" id="PTHR11088:SF60">
    <property type="entry name" value="TRNA DIMETHYLALLYLTRANSFERASE"/>
    <property type="match status" value="1"/>
</dbReference>
<dbReference type="Pfam" id="PF01715">
    <property type="entry name" value="IPPT"/>
    <property type="match status" value="1"/>
</dbReference>
<dbReference type="SUPFAM" id="SSF52540">
    <property type="entry name" value="P-loop containing nucleoside triphosphate hydrolases"/>
    <property type="match status" value="1"/>
</dbReference>
<organism>
    <name type="scientific">Prochlorococcus marinus (strain AS9601)</name>
    <dbReference type="NCBI Taxonomy" id="146891"/>
    <lineage>
        <taxon>Bacteria</taxon>
        <taxon>Bacillati</taxon>
        <taxon>Cyanobacteriota</taxon>
        <taxon>Cyanophyceae</taxon>
        <taxon>Synechococcales</taxon>
        <taxon>Prochlorococcaceae</taxon>
        <taxon>Prochlorococcus</taxon>
    </lineage>
</organism>
<evidence type="ECO:0000255" key="1">
    <source>
        <dbReference type="HAMAP-Rule" id="MF_00185"/>
    </source>
</evidence>
<comment type="function">
    <text evidence="1">Catalyzes the transfer of a dimethylallyl group onto the adenine at position 37 in tRNAs that read codons beginning with uridine, leading to the formation of N6-(dimethylallyl)adenosine (i(6)A).</text>
</comment>
<comment type="catalytic activity">
    <reaction evidence="1">
        <text>adenosine(37) in tRNA + dimethylallyl diphosphate = N(6)-dimethylallyladenosine(37) in tRNA + diphosphate</text>
        <dbReference type="Rhea" id="RHEA:26482"/>
        <dbReference type="Rhea" id="RHEA-COMP:10162"/>
        <dbReference type="Rhea" id="RHEA-COMP:10375"/>
        <dbReference type="ChEBI" id="CHEBI:33019"/>
        <dbReference type="ChEBI" id="CHEBI:57623"/>
        <dbReference type="ChEBI" id="CHEBI:74411"/>
        <dbReference type="ChEBI" id="CHEBI:74415"/>
        <dbReference type="EC" id="2.5.1.75"/>
    </reaction>
</comment>
<comment type="cofactor">
    <cofactor evidence="1">
        <name>Mg(2+)</name>
        <dbReference type="ChEBI" id="CHEBI:18420"/>
    </cofactor>
</comment>
<comment type="subunit">
    <text evidence="1">Monomer.</text>
</comment>
<comment type="similarity">
    <text evidence="1">Belongs to the IPP transferase family.</text>
</comment>
<proteinExistence type="inferred from homology"/>
<gene>
    <name evidence="1" type="primary">miaA</name>
    <name type="ordered locus">A9601_18451</name>
</gene>
<reference key="1">
    <citation type="journal article" date="2007" name="PLoS Genet.">
        <title>Patterns and implications of gene gain and loss in the evolution of Prochlorococcus.</title>
        <authorList>
            <person name="Kettler G.C."/>
            <person name="Martiny A.C."/>
            <person name="Huang K."/>
            <person name="Zucker J."/>
            <person name="Coleman M.L."/>
            <person name="Rodrigue S."/>
            <person name="Chen F."/>
            <person name="Lapidus A."/>
            <person name="Ferriera S."/>
            <person name="Johnson J."/>
            <person name="Steglich C."/>
            <person name="Church G.M."/>
            <person name="Richardson P."/>
            <person name="Chisholm S.W."/>
        </authorList>
    </citation>
    <scope>NUCLEOTIDE SEQUENCE [LARGE SCALE GENOMIC DNA]</scope>
    <source>
        <strain>AS9601</strain>
    </source>
</reference>
<sequence>MSRDLPNVIILIGPTASGKTELAIEIAEYFKTHIHNIDSRQIYKSMDIGTAKPSKNQQKKIKHFLIDIEEPIHPINVKQFQGIAQKSIKSEIKQNNLPFLVGGSGLYMNSITKGFFVPDVPPQNDLRKQLEELGQKKCWDLLKNCDPLSTKKINFADHIRTIRALEVFYVTGKPLSTLKVQRAPDWRILELGLDRDNLKERILQRTKNMFSAGIIEETNYLISKYGFDLPILETIGYREAKDVLKNHSTIDKAIELTTTKTIQYAKRQKTWFRNKNNPLWLDNKNLLKDAIIKIESFLS</sequence>
<feature type="chain" id="PRO_1000020637" description="tRNA dimethylallyltransferase">
    <location>
        <begin position="1"/>
        <end position="299"/>
    </location>
</feature>
<feature type="region of interest" description="Interaction with substrate tRNA" evidence="1">
    <location>
        <begin position="38"/>
        <end position="41"/>
    </location>
</feature>
<feature type="binding site" evidence="1">
    <location>
        <begin position="13"/>
        <end position="20"/>
    </location>
    <ligand>
        <name>ATP</name>
        <dbReference type="ChEBI" id="CHEBI:30616"/>
    </ligand>
</feature>
<feature type="binding site" evidence="1">
    <location>
        <begin position="15"/>
        <end position="20"/>
    </location>
    <ligand>
        <name>substrate</name>
    </ligand>
</feature>
<feature type="site" description="Interaction with substrate tRNA" evidence="1">
    <location>
        <position position="104"/>
    </location>
</feature>
<protein>
    <recommendedName>
        <fullName evidence="1">tRNA dimethylallyltransferase</fullName>
        <ecNumber evidence="1">2.5.1.75</ecNumber>
    </recommendedName>
    <alternativeName>
        <fullName evidence="1">Dimethylallyl diphosphate:tRNA dimethylallyltransferase</fullName>
        <shortName evidence="1">DMAPP:tRNA dimethylallyltransferase</shortName>
        <shortName evidence="1">DMATase</shortName>
    </alternativeName>
    <alternativeName>
        <fullName evidence="1">Isopentenyl-diphosphate:tRNA isopentenyltransferase</fullName>
        <shortName evidence="1">IPP transferase</shortName>
        <shortName evidence="1">IPPT</shortName>
        <shortName evidence="1">IPTase</shortName>
    </alternativeName>
</protein>
<keyword id="KW-0067">ATP-binding</keyword>
<keyword id="KW-0460">Magnesium</keyword>
<keyword id="KW-0547">Nucleotide-binding</keyword>
<keyword id="KW-0808">Transferase</keyword>
<keyword id="KW-0819">tRNA processing</keyword>